<protein>
    <recommendedName>
        <fullName evidence="1">YcgL domain-containing protein HD_1373</fullName>
    </recommendedName>
</protein>
<dbReference type="EMBL" id="AE017143">
    <property type="protein sequence ID" value="AAP96186.1"/>
    <property type="molecule type" value="Genomic_DNA"/>
</dbReference>
<dbReference type="SMR" id="Q7VLP9"/>
<dbReference type="STRING" id="233412.HD_1373"/>
<dbReference type="KEGG" id="hdu:HD_1373"/>
<dbReference type="eggNOG" id="COG3100">
    <property type="taxonomic scope" value="Bacteria"/>
</dbReference>
<dbReference type="HOGENOM" id="CLU_155118_1_0_6"/>
<dbReference type="Proteomes" id="UP000001022">
    <property type="component" value="Chromosome"/>
</dbReference>
<dbReference type="Gene3D" id="3.10.510.20">
    <property type="entry name" value="YcgL domain"/>
    <property type="match status" value="1"/>
</dbReference>
<dbReference type="HAMAP" id="MF_01866">
    <property type="entry name" value="UPF0745"/>
    <property type="match status" value="1"/>
</dbReference>
<dbReference type="InterPro" id="IPR038068">
    <property type="entry name" value="YcgL-like_sf"/>
</dbReference>
<dbReference type="InterPro" id="IPR027354">
    <property type="entry name" value="YcgL_dom"/>
</dbReference>
<dbReference type="PANTHER" id="PTHR38109">
    <property type="entry name" value="PROTEIN YCGL"/>
    <property type="match status" value="1"/>
</dbReference>
<dbReference type="PANTHER" id="PTHR38109:SF1">
    <property type="entry name" value="PROTEIN YCGL"/>
    <property type="match status" value="1"/>
</dbReference>
<dbReference type="Pfam" id="PF05166">
    <property type="entry name" value="YcgL"/>
    <property type="match status" value="1"/>
</dbReference>
<dbReference type="SUPFAM" id="SSF160191">
    <property type="entry name" value="YcgL-like"/>
    <property type="match status" value="1"/>
</dbReference>
<dbReference type="PROSITE" id="PS51648">
    <property type="entry name" value="YCGL"/>
    <property type="match status" value="1"/>
</dbReference>
<reference key="1">
    <citation type="submission" date="2003-06" db="EMBL/GenBank/DDBJ databases">
        <title>The complete genome sequence of Haemophilus ducreyi.</title>
        <authorList>
            <person name="Munson R.S. Jr."/>
            <person name="Ray W.C."/>
            <person name="Mahairas G."/>
            <person name="Sabo P."/>
            <person name="Mungur R."/>
            <person name="Johnson L."/>
            <person name="Nguyen D."/>
            <person name="Wang J."/>
            <person name="Forst C."/>
            <person name="Hood L."/>
        </authorList>
    </citation>
    <scope>NUCLEOTIDE SEQUENCE [LARGE SCALE GENOMIC DNA]</scope>
    <source>
        <strain>35000HP / ATCC 700724</strain>
    </source>
</reference>
<sequence>MYIVMNSNFCAIYKSMSKEGMFLYIAQRDKFNAVPEQLLQMFGKPQFVMLFNLAGEKPLKQVNNQDVLLAIKTQGFFLQISPPAENLLKQFLIQKGEKK</sequence>
<organism>
    <name type="scientific">Haemophilus ducreyi (strain 35000HP / ATCC 700724)</name>
    <dbReference type="NCBI Taxonomy" id="233412"/>
    <lineage>
        <taxon>Bacteria</taxon>
        <taxon>Pseudomonadati</taxon>
        <taxon>Pseudomonadota</taxon>
        <taxon>Gammaproteobacteria</taxon>
        <taxon>Pasteurellales</taxon>
        <taxon>Pasteurellaceae</taxon>
        <taxon>Haemophilus</taxon>
    </lineage>
</organism>
<accession>Q7VLP9</accession>
<feature type="chain" id="PRO_0000375307" description="YcgL domain-containing protein HD_1373">
    <location>
        <begin position="1"/>
        <end position="99"/>
    </location>
</feature>
<feature type="domain" description="YcgL" evidence="1">
    <location>
        <begin position="8"/>
        <end position="92"/>
    </location>
</feature>
<name>Y1373_HAEDU</name>
<proteinExistence type="inferred from homology"/>
<evidence type="ECO:0000255" key="1">
    <source>
        <dbReference type="HAMAP-Rule" id="MF_01866"/>
    </source>
</evidence>
<keyword id="KW-1185">Reference proteome</keyword>
<gene>
    <name type="ordered locus">HD_1373</name>
</gene>